<protein>
    <recommendedName>
        <fullName>Lysozyme g</fullName>
        <ecNumber>3.2.1.17</ecNumber>
    </recommendedName>
    <alternativeName>
        <fullName>1,4-beta-N-acetylmuramidase</fullName>
    </alternativeName>
    <alternativeName>
        <fullName>Goose-type lysozyme</fullName>
    </alternativeName>
</protein>
<evidence type="ECO:0000250" key="1"/>
<evidence type="ECO:0000255" key="2"/>
<evidence type="ECO:0000305" key="3"/>
<reference key="1">
    <citation type="journal article" date="1991" name="Biochim. Biophys. Acta">
        <title>Goose-type lysozyme gene of the chicken: sequence, genomic organization and expression reveals major differences to chicken-type lysozyme gene.</title>
        <authorList>
            <person name="Nakano T."/>
            <person name="Graf T."/>
        </authorList>
    </citation>
    <scope>NUCLEOTIDE SEQUENCE [GENOMIC DNA / MRNA]</scope>
</reference>
<comment type="catalytic activity">
    <reaction>
        <text>Hydrolysis of (1-&gt;4)-beta-linkages between N-acetylmuramic acid and N-acetyl-D-glucosamine residues in a peptidoglycan and between N-acetyl-D-glucosamine residues in chitodextrins.</text>
        <dbReference type="EC" id="3.2.1.17"/>
    </reaction>
</comment>
<comment type="subcellular location">
    <subcellularLocation>
        <location>Secreted</location>
    </subcellularLocation>
</comment>
<comment type="tissue specificity">
    <text>Granulocyte compartment of myelomonocytic cells.</text>
</comment>
<comment type="miscellaneous">
    <text>Shows preference for N-acetylmuramic acid residues that are substituted with a peptide moiety. It acts only as a glycanohydrolase.</text>
</comment>
<comment type="similarity">
    <text evidence="3">Belongs to the glycosyl hydrolase 23 family.</text>
</comment>
<organism>
    <name type="scientific">Gallus gallus</name>
    <name type="common">Chicken</name>
    <dbReference type="NCBI Taxonomy" id="9031"/>
    <lineage>
        <taxon>Eukaryota</taxon>
        <taxon>Metazoa</taxon>
        <taxon>Chordata</taxon>
        <taxon>Craniata</taxon>
        <taxon>Vertebrata</taxon>
        <taxon>Euteleostomi</taxon>
        <taxon>Archelosauria</taxon>
        <taxon>Archosauria</taxon>
        <taxon>Dinosauria</taxon>
        <taxon>Saurischia</taxon>
        <taxon>Theropoda</taxon>
        <taxon>Coelurosauria</taxon>
        <taxon>Aves</taxon>
        <taxon>Neognathae</taxon>
        <taxon>Galloanserae</taxon>
        <taxon>Galliformes</taxon>
        <taxon>Phasianidae</taxon>
        <taxon>Phasianinae</taxon>
        <taxon>Gallus</taxon>
    </lineage>
</organism>
<proteinExistence type="evidence at transcript level"/>
<accession>P27042</accession>
<dbReference type="EC" id="3.2.1.17"/>
<dbReference type="EMBL" id="X61001">
    <property type="protein sequence ID" value="CAA43319.1"/>
    <property type="molecule type" value="Genomic_DNA"/>
</dbReference>
<dbReference type="EMBL" id="X61002">
    <property type="protein sequence ID" value="CAA43320.1"/>
    <property type="molecule type" value="mRNA"/>
</dbReference>
<dbReference type="EMBL" id="X61197">
    <property type="status" value="NOT_ANNOTATED_CDS"/>
    <property type="molecule type" value="mRNA"/>
</dbReference>
<dbReference type="EMBL" id="X61198">
    <property type="protein sequence ID" value="CAB37929.1"/>
    <property type="molecule type" value="mRNA"/>
</dbReference>
<dbReference type="PIR" id="S18463">
    <property type="entry name" value="S18463"/>
</dbReference>
<dbReference type="RefSeq" id="NP_001001470.1">
    <property type="nucleotide sequence ID" value="NM_001001470.2"/>
</dbReference>
<dbReference type="RefSeq" id="XP_015133176.2">
    <property type="nucleotide sequence ID" value="XM_015277690.4"/>
</dbReference>
<dbReference type="SMR" id="P27042"/>
<dbReference type="STRING" id="9031.ENSGALP00000027012"/>
<dbReference type="CAZy" id="GH23">
    <property type="family name" value="Glycoside Hydrolase Family 23"/>
</dbReference>
<dbReference type="PaxDb" id="9031-ENSGALP00000027012"/>
<dbReference type="Ensembl" id="ENSGALT00010038127.1">
    <property type="protein sequence ID" value="ENSGALP00010021998.1"/>
    <property type="gene ID" value="ENSGALG00010015831.1"/>
</dbReference>
<dbReference type="GeneID" id="395708"/>
<dbReference type="KEGG" id="gga:395708"/>
<dbReference type="CTD" id="395708"/>
<dbReference type="VEuPathDB" id="HostDB:geneid_395708"/>
<dbReference type="eggNOG" id="ENOG502RZXI">
    <property type="taxonomic scope" value="Eukaryota"/>
</dbReference>
<dbReference type="GeneTree" id="ENSGT00390000017614"/>
<dbReference type="InParanoid" id="P27042"/>
<dbReference type="OMA" id="CQGRTDC"/>
<dbReference type="OrthoDB" id="10021790at2759"/>
<dbReference type="PhylomeDB" id="P27042"/>
<dbReference type="PRO" id="PR:P27042"/>
<dbReference type="Proteomes" id="UP000000539">
    <property type="component" value="Chromosome 1"/>
</dbReference>
<dbReference type="GO" id="GO:0005576">
    <property type="term" value="C:extracellular region"/>
    <property type="evidence" value="ECO:0000318"/>
    <property type="project" value="GO_Central"/>
</dbReference>
<dbReference type="GO" id="GO:0003796">
    <property type="term" value="F:lysozyme activity"/>
    <property type="evidence" value="ECO:0000318"/>
    <property type="project" value="GO_Central"/>
</dbReference>
<dbReference type="GO" id="GO:0050830">
    <property type="term" value="P:defense response to Gram-positive bacterium"/>
    <property type="evidence" value="ECO:0000318"/>
    <property type="project" value="GO_Central"/>
</dbReference>
<dbReference type="GO" id="GO:0031640">
    <property type="term" value="P:killing of cells of another organism"/>
    <property type="evidence" value="ECO:0007669"/>
    <property type="project" value="UniProtKB-KW"/>
</dbReference>
<dbReference type="GO" id="GO:0009253">
    <property type="term" value="P:peptidoglycan catabolic process"/>
    <property type="evidence" value="ECO:0007669"/>
    <property type="project" value="InterPro"/>
</dbReference>
<dbReference type="CDD" id="cd01021">
    <property type="entry name" value="GEWL"/>
    <property type="match status" value="1"/>
</dbReference>
<dbReference type="FunFam" id="1.10.530.10:FF:000026">
    <property type="entry name" value="Lysozyme g"/>
    <property type="match status" value="1"/>
</dbReference>
<dbReference type="Gene3D" id="1.10.530.10">
    <property type="match status" value="1"/>
</dbReference>
<dbReference type="InterPro" id="IPR002152">
    <property type="entry name" value="Glyco_hydro_23"/>
</dbReference>
<dbReference type="InterPro" id="IPR023346">
    <property type="entry name" value="Lysozyme-like_dom_sf"/>
</dbReference>
<dbReference type="PANTHER" id="PTHR31698">
    <property type="entry name" value="LYSOZYME G FAMILY MEMBER"/>
    <property type="match status" value="1"/>
</dbReference>
<dbReference type="PANTHER" id="PTHR31698:SF8">
    <property type="entry name" value="LYSOZYME G-RELATED"/>
    <property type="match status" value="1"/>
</dbReference>
<dbReference type="PIRSF" id="PIRSF001065">
    <property type="entry name" value="Lysozyme_g"/>
    <property type="match status" value="1"/>
</dbReference>
<dbReference type="PRINTS" id="PR00749">
    <property type="entry name" value="LYSOZYMEG"/>
</dbReference>
<dbReference type="SUPFAM" id="SSF53955">
    <property type="entry name" value="Lysozyme-like"/>
    <property type="match status" value="1"/>
</dbReference>
<name>LYG_CHICK</name>
<feature type="signal peptide" evidence="2">
    <location>
        <begin position="1"/>
        <end position="26"/>
    </location>
</feature>
<feature type="chain" id="PRO_0000012022" description="Lysozyme g">
    <location>
        <begin position="27"/>
        <end position="211"/>
    </location>
</feature>
<feature type="active site" evidence="1">
    <location>
        <position position="99"/>
    </location>
</feature>
<feature type="active site" evidence="1">
    <location>
        <position position="112"/>
    </location>
</feature>
<feature type="disulfide bond" evidence="1">
    <location>
        <begin position="30"/>
        <end position="86"/>
    </location>
</feature>
<feature type="disulfide bond" evidence="1">
    <location>
        <begin position="44"/>
        <end position="55"/>
    </location>
</feature>
<sequence length="211" mass="23238">MLGKNDPMCLVLVLLGLTALLGICQGGTGCYGSVSRIDTTGASCRTAKPEGLSYCGVRASRTIAERDLGSMNKYKVLIKRVGEALCIEPAVIAGIISRESHAGKILKNGWGDRGNGFGLMQVDKRYHKIEGTWNGEAHIRQGTRILIDMVKKIQRKFPRWTRDQQLKGGISAYNAGVGNVRSYERMDIGTLHDDYSNDVVARAQYFKQHGY</sequence>
<keyword id="KW-0929">Antimicrobial</keyword>
<keyword id="KW-0081">Bacteriolytic enzyme</keyword>
<keyword id="KW-1015">Disulfide bond</keyword>
<keyword id="KW-0326">Glycosidase</keyword>
<keyword id="KW-0378">Hydrolase</keyword>
<keyword id="KW-1185">Reference proteome</keyword>
<keyword id="KW-0964">Secreted</keyword>
<keyword id="KW-0732">Signal</keyword>